<organism>
    <name type="scientific">Porcine respiratory coronavirus (strain RM4)</name>
    <name type="common">PRCoV</name>
    <name type="synonym">PRCV</name>
    <dbReference type="NCBI Taxonomy" id="11148"/>
    <lineage>
        <taxon>Viruses</taxon>
        <taxon>Riboviria</taxon>
        <taxon>Orthornavirae</taxon>
        <taxon>Pisuviricota</taxon>
        <taxon>Pisoniviricetes</taxon>
        <taxon>Nidovirales</taxon>
        <taxon>Cornidovirineae</taxon>
        <taxon>Coronaviridae</taxon>
        <taxon>Orthocoronavirinae</taxon>
        <taxon>Alphacoronavirus</taxon>
        <taxon>Tegacovirus</taxon>
        <taxon>Alphacoronavirus 1</taxon>
    </lineage>
</organism>
<accession>P24411</accession>
<protein>
    <recommendedName>
        <fullName evidence="1">Nucleoprotein</fullName>
    </recommendedName>
    <alternativeName>
        <fullName evidence="1">Nucleocapsid protein</fullName>
        <shortName evidence="1">NC</shortName>
        <shortName evidence="1">Protein N</shortName>
    </alternativeName>
</protein>
<gene>
    <name evidence="1" type="primary">N</name>
</gene>
<name>NCAP_CVPRM</name>
<organismHost>
    <name type="scientific">Sus scrofa</name>
    <name type="common">Pig</name>
    <dbReference type="NCBI Taxonomy" id="9823"/>
</organismHost>
<proteinExistence type="inferred from homology"/>
<keyword id="KW-0013">ADP-ribosylation</keyword>
<keyword id="KW-1040">Host Golgi apparatus</keyword>
<keyword id="KW-0597">Phosphoprotein</keyword>
<keyword id="KW-0687">Ribonucleoprotein</keyword>
<keyword id="KW-0694">RNA-binding</keyword>
<keyword id="KW-0804">Transcription</keyword>
<keyword id="KW-0805">Transcription regulation</keyword>
<keyword id="KW-0543">Viral nucleoprotein</keyword>
<keyword id="KW-0946">Virion</keyword>
<comment type="function">
    <text evidence="1">Packages the positive strand viral genome RNA into a helical ribonucleocapsid (RNP) and plays a fundamental role during virion assembly through its interactions with the viral genome and membrane protein M. Plays an important role in enhancing the efficiency of subgenomic viral RNA transcription as well as viral replication.</text>
</comment>
<comment type="subunit">
    <text evidence="1">Homooligomer. Both monomeric and oligomeric forms interact with RNA. Interacts with protein M. Interacts with NSP3; this interaction serves to tether the genome to the newly translated replicase-transcriptase complex at a very early stage of infection.</text>
</comment>
<comment type="subcellular location">
    <subcellularLocation>
        <location evidence="1">Virion</location>
    </subcellularLocation>
    <subcellularLocation>
        <location evidence="1">Host endoplasmic reticulum-Golgi intermediate compartment</location>
    </subcellularLocation>
    <subcellularLocation>
        <location evidence="1">Host Golgi apparatus</location>
    </subcellularLocation>
    <text evidence="1">Located inside the virion, complexed with the viral RNA. Probably associates with ER-derived membranes where it participates in viral RNA synthesis and virus budding.</text>
</comment>
<comment type="PTM">
    <text evidence="1">ADP-ribosylated. The ADP-ribosylation is retained in the virion during infection.</text>
</comment>
<comment type="PTM">
    <text evidence="1">Phosphorylated on serine and threonine residues.</text>
</comment>
<comment type="similarity">
    <text evidence="1">Belongs to the alphacoronavirus nucleocapsid protein family.</text>
</comment>
<feature type="chain" id="PRO_0000106016" description="Nucleoprotein">
    <location>
        <begin position="1"/>
        <end position="382"/>
    </location>
</feature>
<feature type="domain" description="CoV N NTD" evidence="2">
    <location>
        <begin position="31"/>
        <end position="153"/>
    </location>
</feature>
<feature type="domain" description="CoV N CTD" evidence="3">
    <location>
        <begin position="224"/>
        <end position="337"/>
    </location>
</feature>
<feature type="region of interest" description="Disordered" evidence="4">
    <location>
        <begin position="1"/>
        <end position="24"/>
    </location>
</feature>
<feature type="region of interest" description="RNA-binding" evidence="1">
    <location>
        <begin position="33"/>
        <end position="159"/>
    </location>
</feature>
<feature type="region of interest" description="Disordered" evidence="4">
    <location>
        <begin position="150"/>
        <end position="190"/>
    </location>
</feature>
<feature type="region of interest" description="Disordered" evidence="4">
    <location>
        <begin position="202"/>
        <end position="240"/>
    </location>
</feature>
<feature type="region of interest" description="Dimerization" evidence="1">
    <location>
        <begin position="231"/>
        <end position="334"/>
    </location>
</feature>
<feature type="region of interest" description="Disordered" evidence="4">
    <location>
        <begin position="328"/>
        <end position="362"/>
    </location>
</feature>
<feature type="compositionally biased region" description="Low complexity" evidence="4">
    <location>
        <begin position="154"/>
        <end position="163"/>
    </location>
</feature>
<feature type="compositionally biased region" description="Basic residues" evidence="4">
    <location>
        <begin position="164"/>
        <end position="176"/>
    </location>
</feature>
<feature type="compositionally biased region" description="Basic and acidic residues" evidence="4">
    <location>
        <begin position="215"/>
        <end position="235"/>
    </location>
</feature>
<feature type="modified residue" description="Phosphoserine; by host" evidence="1">
    <location>
        <position position="9"/>
    </location>
</feature>
<feature type="modified residue" description="Phosphoserine; by host" evidence="1">
    <location>
        <position position="156"/>
    </location>
</feature>
<feature type="modified residue" description="Phosphoserine; by host" evidence="1">
    <location>
        <position position="254"/>
    </location>
</feature>
<feature type="modified residue" description="Phosphoserine; by host" evidence="1">
    <location>
        <position position="256"/>
    </location>
</feature>
<reference key="1">
    <citation type="journal article" date="1990" name="J. Gen. Virol.">
        <title>Porcine respiratory coronavirus differs from transmissible gastroenteritis virus by a few genomic deletions.</title>
        <authorList>
            <person name="Rasschaert D."/>
            <person name="Duarte M."/>
            <person name="Laude H."/>
        </authorList>
    </citation>
    <scope>NUCLEOTIDE SEQUENCE [GENOMIC RNA]</scope>
</reference>
<evidence type="ECO:0000255" key="1">
    <source>
        <dbReference type="HAMAP-Rule" id="MF_04095"/>
    </source>
</evidence>
<evidence type="ECO:0000255" key="2">
    <source>
        <dbReference type="PROSITE-ProRule" id="PRU01276"/>
    </source>
</evidence>
<evidence type="ECO:0000255" key="3">
    <source>
        <dbReference type="PROSITE-ProRule" id="PRU01277"/>
    </source>
</evidence>
<evidence type="ECO:0000256" key="4">
    <source>
        <dbReference type="SAM" id="MobiDB-lite"/>
    </source>
</evidence>
<dbReference type="EMBL" id="Z24675">
    <property type="protein sequence ID" value="CAA80841.1"/>
    <property type="molecule type" value="Genomic_RNA"/>
</dbReference>
<dbReference type="PIR" id="E36607">
    <property type="entry name" value="E36607"/>
</dbReference>
<dbReference type="SMR" id="P24411"/>
<dbReference type="IntAct" id="P24411">
    <property type="interactions" value="1"/>
</dbReference>
<dbReference type="GO" id="GO:0044172">
    <property type="term" value="C:host cell endoplasmic reticulum-Golgi intermediate compartment"/>
    <property type="evidence" value="ECO:0007669"/>
    <property type="project" value="UniProtKB-SubCell"/>
</dbReference>
<dbReference type="GO" id="GO:0044177">
    <property type="term" value="C:host cell Golgi apparatus"/>
    <property type="evidence" value="ECO:0007669"/>
    <property type="project" value="UniProtKB-SubCell"/>
</dbReference>
<dbReference type="GO" id="GO:1990904">
    <property type="term" value="C:ribonucleoprotein complex"/>
    <property type="evidence" value="ECO:0007669"/>
    <property type="project" value="UniProtKB-KW"/>
</dbReference>
<dbReference type="GO" id="GO:0019013">
    <property type="term" value="C:viral nucleocapsid"/>
    <property type="evidence" value="ECO:0007669"/>
    <property type="project" value="UniProtKB-KW"/>
</dbReference>
<dbReference type="GO" id="GO:0003723">
    <property type="term" value="F:RNA binding"/>
    <property type="evidence" value="ECO:0007669"/>
    <property type="project" value="UniProtKB-KW"/>
</dbReference>
<dbReference type="CDD" id="cd21595">
    <property type="entry name" value="CoV_N-CTD"/>
    <property type="match status" value="1"/>
</dbReference>
<dbReference type="CDD" id="cd21554">
    <property type="entry name" value="CoV_N-NTD"/>
    <property type="match status" value="1"/>
</dbReference>
<dbReference type="HAMAP" id="MF_04095">
    <property type="entry name" value="ALPHA_CORONA_NCAP"/>
    <property type="match status" value="1"/>
</dbReference>
<dbReference type="InterPro" id="IPR044344">
    <property type="entry name" value="N_prot_C_CoV"/>
</dbReference>
<dbReference type="InterPro" id="IPR044345">
    <property type="entry name" value="N_prot_N_CoV"/>
</dbReference>
<dbReference type="InterPro" id="IPR042548">
    <property type="entry name" value="NCAP_aCoV"/>
</dbReference>
<dbReference type="InterPro" id="IPR001218">
    <property type="entry name" value="Nucleocap_CoV"/>
</dbReference>
<dbReference type="InterPro" id="IPR037179">
    <property type="entry name" value="Nucleocapsid_C"/>
</dbReference>
<dbReference type="InterPro" id="IPR037195">
    <property type="entry name" value="Nucleocapsid_N"/>
</dbReference>
<dbReference type="Pfam" id="PF00937">
    <property type="entry name" value="CoV_nucleocap"/>
    <property type="match status" value="1"/>
</dbReference>
<dbReference type="PIRSF" id="PIRSF003888">
    <property type="entry name" value="Corona_nucleocap"/>
    <property type="match status" value="1"/>
</dbReference>
<dbReference type="SUPFAM" id="SSF110304">
    <property type="entry name" value="Coronavirus RNA-binding domain"/>
    <property type="match status" value="1"/>
</dbReference>
<dbReference type="SUPFAM" id="SSF103068">
    <property type="entry name" value="Nucleocapsid protein dimerization domain"/>
    <property type="match status" value="1"/>
</dbReference>
<dbReference type="PROSITE" id="PS51929">
    <property type="entry name" value="COV_N_CTD"/>
    <property type="match status" value="1"/>
</dbReference>
<dbReference type="PROSITE" id="PS51928">
    <property type="entry name" value="COV_N_NTD"/>
    <property type="match status" value="1"/>
</dbReference>
<sequence>MANQGQRVSWGDESTKIRGRSNSRGRKINNIPLSFFNPITLQQGAKFWNSCPRDFVPKGIGNRDQQIGYWNRQTRYRMVKGQRKELPERWFFYYLGTGPHADAKFKDKLDGVVWVAKDGAMNKPTTLGSRGANNESKALKFDGKVPGEFQLEVNQSRDNSRSRSQSRSRSRNRSQSRGRQQSNNKKDDSVEQAVLAALKKLGVYTEKQQQRSRSKSKERSNSKTRDTTPKNENKHTWKRTAGKGDVTRFYGARSSSANFGDSDLVANGSSAKHYPQLAECVPSVSSILFGSYWTSKEDGDQIEVTFTHKYHLPKDHPKTEQFLQQINAYASPSELAKEQRKRKSRSKSAERSEQEVVPDSLIENYTDVFDDTQVEMIDEVTN</sequence>